<keyword id="KW-0012">Acyltransferase</keyword>
<keyword id="KW-0963">Cytoplasm</keyword>
<keyword id="KW-0808">Transferase</keyword>
<proteinExistence type="inferred from homology"/>
<reference key="1">
    <citation type="journal article" date="2003" name="Nature">
        <title>The genome of a motile marine Synechococcus.</title>
        <authorList>
            <person name="Palenik B."/>
            <person name="Brahamsha B."/>
            <person name="Larimer F.W."/>
            <person name="Land M.L."/>
            <person name="Hauser L."/>
            <person name="Chain P."/>
            <person name="Lamerdin J.E."/>
            <person name="Regala W."/>
            <person name="Allen E.E."/>
            <person name="McCarren J."/>
            <person name="Paulsen I.T."/>
            <person name="Dufresne A."/>
            <person name="Partensky F."/>
            <person name="Webb E.A."/>
            <person name="Waterbury J."/>
        </authorList>
    </citation>
    <scope>NUCLEOTIDE SEQUENCE [LARGE SCALE GENOMIC DNA]</scope>
    <source>
        <strain>WH8102</strain>
    </source>
</reference>
<accession>Q7U8F2</accession>
<name>LIPB_PARMW</name>
<dbReference type="EC" id="2.3.1.181" evidence="1"/>
<dbReference type="EMBL" id="BX569690">
    <property type="protein sequence ID" value="CAE07183.1"/>
    <property type="molecule type" value="Genomic_DNA"/>
</dbReference>
<dbReference type="RefSeq" id="WP_011127535.1">
    <property type="nucleotide sequence ID" value="NC_005070.1"/>
</dbReference>
<dbReference type="SMR" id="Q7U8F2"/>
<dbReference type="STRING" id="84588.SYNW0668"/>
<dbReference type="KEGG" id="syw:SYNW0668"/>
<dbReference type="eggNOG" id="COG0321">
    <property type="taxonomic scope" value="Bacteria"/>
</dbReference>
<dbReference type="HOGENOM" id="CLU_035168_1_0_3"/>
<dbReference type="UniPathway" id="UPA00538">
    <property type="reaction ID" value="UER00592"/>
</dbReference>
<dbReference type="Proteomes" id="UP000001422">
    <property type="component" value="Chromosome"/>
</dbReference>
<dbReference type="GO" id="GO:0005737">
    <property type="term" value="C:cytoplasm"/>
    <property type="evidence" value="ECO:0007669"/>
    <property type="project" value="UniProtKB-SubCell"/>
</dbReference>
<dbReference type="GO" id="GO:0033819">
    <property type="term" value="F:lipoyl(octanoyl) transferase activity"/>
    <property type="evidence" value="ECO:0007669"/>
    <property type="project" value="UniProtKB-EC"/>
</dbReference>
<dbReference type="GO" id="GO:0036211">
    <property type="term" value="P:protein modification process"/>
    <property type="evidence" value="ECO:0007669"/>
    <property type="project" value="InterPro"/>
</dbReference>
<dbReference type="CDD" id="cd16444">
    <property type="entry name" value="LipB"/>
    <property type="match status" value="1"/>
</dbReference>
<dbReference type="Gene3D" id="3.30.930.10">
    <property type="entry name" value="Bira Bifunctional Protein, Domain 2"/>
    <property type="match status" value="1"/>
</dbReference>
<dbReference type="HAMAP" id="MF_00013">
    <property type="entry name" value="LipB"/>
    <property type="match status" value="1"/>
</dbReference>
<dbReference type="InterPro" id="IPR045864">
    <property type="entry name" value="aa-tRNA-synth_II/BPL/LPL"/>
</dbReference>
<dbReference type="InterPro" id="IPR004143">
    <property type="entry name" value="BPL_LPL_catalytic"/>
</dbReference>
<dbReference type="InterPro" id="IPR000544">
    <property type="entry name" value="Octanoyltransferase"/>
</dbReference>
<dbReference type="InterPro" id="IPR020605">
    <property type="entry name" value="Octanoyltransferase_CS"/>
</dbReference>
<dbReference type="NCBIfam" id="TIGR00214">
    <property type="entry name" value="lipB"/>
    <property type="match status" value="1"/>
</dbReference>
<dbReference type="PANTHER" id="PTHR10993:SF7">
    <property type="entry name" value="LIPOYLTRANSFERASE 2, MITOCHONDRIAL-RELATED"/>
    <property type="match status" value="1"/>
</dbReference>
<dbReference type="PANTHER" id="PTHR10993">
    <property type="entry name" value="OCTANOYLTRANSFERASE"/>
    <property type="match status" value="1"/>
</dbReference>
<dbReference type="Pfam" id="PF21948">
    <property type="entry name" value="LplA-B_cat"/>
    <property type="match status" value="1"/>
</dbReference>
<dbReference type="SUPFAM" id="SSF55681">
    <property type="entry name" value="Class II aaRS and biotin synthetases"/>
    <property type="match status" value="1"/>
</dbReference>
<dbReference type="PROSITE" id="PS51733">
    <property type="entry name" value="BPL_LPL_CATALYTIC"/>
    <property type="match status" value="1"/>
</dbReference>
<dbReference type="PROSITE" id="PS01313">
    <property type="entry name" value="LIPB"/>
    <property type="match status" value="1"/>
</dbReference>
<feature type="chain" id="PRO_0000062883" description="Octanoyltransferase">
    <location>
        <begin position="1"/>
        <end position="231"/>
    </location>
</feature>
<feature type="domain" description="BPL/LPL catalytic" evidence="2">
    <location>
        <begin position="49"/>
        <end position="227"/>
    </location>
</feature>
<feature type="active site" description="Acyl-thioester intermediate" evidence="1">
    <location>
        <position position="189"/>
    </location>
</feature>
<feature type="binding site" evidence="1">
    <location>
        <begin position="91"/>
        <end position="98"/>
    </location>
    <ligand>
        <name>substrate</name>
    </ligand>
</feature>
<feature type="binding site" evidence="1">
    <location>
        <begin position="158"/>
        <end position="160"/>
    </location>
    <ligand>
        <name>substrate</name>
    </ligand>
</feature>
<feature type="binding site" evidence="1">
    <location>
        <begin position="171"/>
        <end position="173"/>
    </location>
    <ligand>
        <name>substrate</name>
    </ligand>
</feature>
<feature type="site" description="Lowers pKa of active site Cys" evidence="1">
    <location>
        <position position="155"/>
    </location>
</feature>
<evidence type="ECO:0000255" key="1">
    <source>
        <dbReference type="HAMAP-Rule" id="MF_00013"/>
    </source>
</evidence>
<evidence type="ECO:0000255" key="2">
    <source>
        <dbReference type="PROSITE-ProRule" id="PRU01067"/>
    </source>
</evidence>
<gene>
    <name evidence="1" type="primary">lipB</name>
    <name type="ordered locus">SYNW0668</name>
</gene>
<protein>
    <recommendedName>
        <fullName evidence="1">Octanoyltransferase</fullName>
        <ecNumber evidence="1">2.3.1.181</ecNumber>
    </recommendedName>
    <alternativeName>
        <fullName evidence="1">Lipoate-protein ligase B</fullName>
    </alternativeName>
    <alternativeName>
        <fullName evidence="1">Lipoyl/octanoyl transferase</fullName>
    </alternativeName>
    <alternativeName>
        <fullName evidence="1">Octanoyl-[acyl-carrier-protein]-protein N-octanoyltransferase</fullName>
    </alternativeName>
</protein>
<organism>
    <name type="scientific">Parasynechococcus marenigrum (strain WH8102)</name>
    <dbReference type="NCBI Taxonomy" id="84588"/>
    <lineage>
        <taxon>Bacteria</taxon>
        <taxon>Bacillati</taxon>
        <taxon>Cyanobacteriota</taxon>
        <taxon>Cyanophyceae</taxon>
        <taxon>Synechococcales</taxon>
        <taxon>Prochlorococcaceae</taxon>
        <taxon>Parasynechococcus</taxon>
        <taxon>Parasynechococcus marenigrum</taxon>
    </lineage>
</organism>
<sequence length="231" mass="25903">MPVDIGKLVTPVDSAHPGSAILVEPADAVPFERSWADQRHWQQRLLEQPHLPEAVWLLQHKACYTLGRGASSEHLHFPLDQPPAPVHRIDRGGEVTHHLPGQLVAYPVLDLRRRQPDLHWYLRELEQVLIDVLAQLDLRGERLPGLTGLWLDNRKVAAIGVGCRRWITQHGLALNIDCELAGFDQVTPCGLSGRAVGRLVDWIPGLRLAEVQPLLRDALAARFHLAWCDEA</sequence>
<comment type="function">
    <text evidence="1">Catalyzes the transfer of endogenously produced octanoic acid from octanoyl-acyl-carrier-protein onto the lipoyl domains of lipoate-dependent enzymes. Lipoyl-ACP can also act as a substrate although octanoyl-ACP is likely to be the physiological substrate.</text>
</comment>
<comment type="catalytic activity">
    <reaction evidence="1">
        <text>octanoyl-[ACP] + L-lysyl-[protein] = N(6)-octanoyl-L-lysyl-[protein] + holo-[ACP] + H(+)</text>
        <dbReference type="Rhea" id="RHEA:17665"/>
        <dbReference type="Rhea" id="RHEA-COMP:9636"/>
        <dbReference type="Rhea" id="RHEA-COMP:9685"/>
        <dbReference type="Rhea" id="RHEA-COMP:9752"/>
        <dbReference type="Rhea" id="RHEA-COMP:9928"/>
        <dbReference type="ChEBI" id="CHEBI:15378"/>
        <dbReference type="ChEBI" id="CHEBI:29969"/>
        <dbReference type="ChEBI" id="CHEBI:64479"/>
        <dbReference type="ChEBI" id="CHEBI:78463"/>
        <dbReference type="ChEBI" id="CHEBI:78809"/>
        <dbReference type="EC" id="2.3.1.181"/>
    </reaction>
</comment>
<comment type="pathway">
    <text evidence="1">Protein modification; protein lipoylation via endogenous pathway; protein N(6)-(lipoyl)lysine from octanoyl-[acyl-carrier-protein]: step 1/2.</text>
</comment>
<comment type="subcellular location">
    <subcellularLocation>
        <location evidence="1">Cytoplasm</location>
    </subcellularLocation>
</comment>
<comment type="miscellaneous">
    <text evidence="1">In the reaction, the free carboxyl group of octanoic acid is attached via an amide linkage to the epsilon-amino group of a specific lysine residue of lipoyl domains of lipoate-dependent enzymes.</text>
</comment>
<comment type="similarity">
    <text evidence="1">Belongs to the LipB family.</text>
</comment>